<keyword id="KW-0067">ATP-binding</keyword>
<keyword id="KW-0963">Cytoplasm</keyword>
<keyword id="KW-0436">Ligase</keyword>
<keyword id="KW-0547">Nucleotide-binding</keyword>
<keyword id="KW-0597">Phosphoprotein</keyword>
<keyword id="KW-1185">Reference proteome</keyword>
<feature type="chain" id="PRO_0000153162" description="Glutamine synthetase">
    <location>
        <begin position="1"/>
        <end position="359"/>
    </location>
</feature>
<feature type="domain" description="GS beta-grasp" evidence="2">
    <location>
        <begin position="28"/>
        <end position="107"/>
    </location>
</feature>
<feature type="domain" description="GS catalytic" evidence="3">
    <location>
        <begin position="114"/>
        <end position="359"/>
    </location>
</feature>
<feature type="modified residue" description="Phosphoserine" evidence="4">
    <location>
        <position position="273"/>
    </location>
</feature>
<feature type="modified residue" description="Phosphothreonine" evidence="4">
    <location>
        <position position="303"/>
    </location>
</feature>
<feature type="modified residue" description="Phosphoserine" evidence="4">
    <location>
        <position position="305"/>
    </location>
</feature>
<proteinExistence type="evidence at protein level"/>
<name>GLNA_SCHPO</name>
<gene>
    <name type="primary">gln1</name>
    <name type="ORF">SPAC23H4.06</name>
</gene>
<protein>
    <recommendedName>
        <fullName>Glutamine synthetase</fullName>
        <shortName>GS</shortName>
        <ecNumber>6.3.1.2</ecNumber>
    </recommendedName>
    <alternativeName>
        <fullName>Glutamate--ammonia ligase</fullName>
    </alternativeName>
</protein>
<sequence length="359" mass="40018">MSQYDVEPLLSKAAILNKYADLPQNGKVMAEYIWIDGFNHLRSKTMTLDAKPSSIDQLRVWNFDGSSTGQAPGNNSDTLLKPVAMYNDPFRRGDNILVLAACYTADGSPNGFNHRDACAKLLEKHADKETWFGIEQEYTMLDYYDRPFGWPKGGFPGPQGPFYCGVGTGRVFARDIVEAHYKACLYAGINISGINAEVMPSQWEYQVGPCAGIEMGDQLWMSRFLLHRIAEDFGVKISFHPKPILGDWNGAGCHTNVSTKDTRAEGGIKAIESYLEKFAKRHKEHIAVYGDDNDLRLTGRHETGSIDKFTYGVADRGASVRIPRSVAMNGCGYFEDRRPASSIDPYLVTGIITETMFEH</sequence>
<comment type="catalytic activity">
    <reaction>
        <text>L-glutamate + NH4(+) + ATP = L-glutamine + ADP + phosphate + H(+)</text>
        <dbReference type="Rhea" id="RHEA:16169"/>
        <dbReference type="ChEBI" id="CHEBI:15378"/>
        <dbReference type="ChEBI" id="CHEBI:28938"/>
        <dbReference type="ChEBI" id="CHEBI:29985"/>
        <dbReference type="ChEBI" id="CHEBI:30616"/>
        <dbReference type="ChEBI" id="CHEBI:43474"/>
        <dbReference type="ChEBI" id="CHEBI:58359"/>
        <dbReference type="ChEBI" id="CHEBI:456216"/>
        <dbReference type="EC" id="6.3.1.2"/>
    </reaction>
</comment>
<comment type="subunit">
    <text evidence="1">Homooctamer.</text>
</comment>
<comment type="subcellular location">
    <subcellularLocation>
        <location evidence="1">Cytoplasm</location>
    </subcellularLocation>
</comment>
<comment type="similarity">
    <text evidence="5">Belongs to the glutamine synthetase family.</text>
</comment>
<evidence type="ECO:0000250" key="1"/>
<evidence type="ECO:0000255" key="2">
    <source>
        <dbReference type="PROSITE-ProRule" id="PRU01330"/>
    </source>
</evidence>
<evidence type="ECO:0000255" key="3">
    <source>
        <dbReference type="PROSITE-ProRule" id="PRU01331"/>
    </source>
</evidence>
<evidence type="ECO:0000269" key="4">
    <source>
    </source>
</evidence>
<evidence type="ECO:0000305" key="5"/>
<organism>
    <name type="scientific">Schizosaccharomyces pombe (strain 972 / ATCC 24843)</name>
    <name type="common">Fission yeast</name>
    <dbReference type="NCBI Taxonomy" id="284812"/>
    <lineage>
        <taxon>Eukaryota</taxon>
        <taxon>Fungi</taxon>
        <taxon>Dikarya</taxon>
        <taxon>Ascomycota</taxon>
        <taxon>Taphrinomycotina</taxon>
        <taxon>Schizosaccharomycetes</taxon>
        <taxon>Schizosaccharomycetales</taxon>
        <taxon>Schizosaccharomycetaceae</taxon>
        <taxon>Schizosaccharomyces</taxon>
    </lineage>
</organism>
<accession>Q09179</accession>
<accession>O13949</accession>
<dbReference type="EC" id="6.3.1.2"/>
<dbReference type="EMBL" id="CU329670">
    <property type="protein sequence ID" value="CAB11660.1"/>
    <property type="molecule type" value="Genomic_DNA"/>
</dbReference>
<dbReference type="PIR" id="T38322">
    <property type="entry name" value="T38322"/>
</dbReference>
<dbReference type="RefSeq" id="NP_593400.1">
    <property type="nucleotide sequence ID" value="NM_001018832.2"/>
</dbReference>
<dbReference type="SMR" id="Q09179"/>
<dbReference type="BioGRID" id="278246">
    <property type="interactions" value="3"/>
</dbReference>
<dbReference type="FunCoup" id="Q09179">
    <property type="interactions" value="650"/>
</dbReference>
<dbReference type="STRING" id="284812.Q09179"/>
<dbReference type="iPTMnet" id="Q09179"/>
<dbReference type="SwissPalm" id="Q09179"/>
<dbReference type="PaxDb" id="4896-SPAC23H4.06.1"/>
<dbReference type="EnsemblFungi" id="SPAC23H4.06.1">
    <property type="protein sequence ID" value="SPAC23H4.06.1:pep"/>
    <property type="gene ID" value="SPAC23H4.06"/>
</dbReference>
<dbReference type="GeneID" id="2541752"/>
<dbReference type="KEGG" id="spo:2541752"/>
<dbReference type="PomBase" id="SPAC23H4.06">
    <property type="gene designation" value="gln1"/>
</dbReference>
<dbReference type="VEuPathDB" id="FungiDB:SPAC23H4.06"/>
<dbReference type="eggNOG" id="KOG0683">
    <property type="taxonomic scope" value="Eukaryota"/>
</dbReference>
<dbReference type="HOGENOM" id="CLU_036762_1_1_1"/>
<dbReference type="InParanoid" id="Q09179"/>
<dbReference type="OMA" id="DRRPNAN"/>
<dbReference type="PhylomeDB" id="Q09179"/>
<dbReference type="Reactome" id="R-SPO-210455">
    <property type="pathway name" value="Astrocytic Glutamate-Glutamine Uptake And Metabolism"/>
</dbReference>
<dbReference type="Reactome" id="R-SPO-8964539">
    <property type="pathway name" value="Glutamate and glutamine metabolism"/>
</dbReference>
<dbReference type="PRO" id="PR:Q09179"/>
<dbReference type="Proteomes" id="UP000002485">
    <property type="component" value="Chromosome I"/>
</dbReference>
<dbReference type="GO" id="GO:0005737">
    <property type="term" value="C:cytoplasm"/>
    <property type="evidence" value="ECO:0000318"/>
    <property type="project" value="GO_Central"/>
</dbReference>
<dbReference type="GO" id="GO:0005829">
    <property type="term" value="C:cytosol"/>
    <property type="evidence" value="ECO:0007005"/>
    <property type="project" value="PomBase"/>
</dbReference>
<dbReference type="GO" id="GO:0005634">
    <property type="term" value="C:nucleus"/>
    <property type="evidence" value="ECO:0007005"/>
    <property type="project" value="PomBase"/>
</dbReference>
<dbReference type="GO" id="GO:0005524">
    <property type="term" value="F:ATP binding"/>
    <property type="evidence" value="ECO:0007669"/>
    <property type="project" value="UniProtKB-KW"/>
</dbReference>
<dbReference type="GO" id="GO:0004356">
    <property type="term" value="F:glutamine synthetase activity"/>
    <property type="evidence" value="ECO:0000314"/>
    <property type="project" value="PomBase"/>
</dbReference>
<dbReference type="GO" id="GO:0019676">
    <property type="term" value="P:ammonia assimilation cycle"/>
    <property type="evidence" value="ECO:0000315"/>
    <property type="project" value="PomBase"/>
</dbReference>
<dbReference type="GO" id="GO:0006542">
    <property type="term" value="P:glutamine biosynthetic process"/>
    <property type="evidence" value="ECO:0000314"/>
    <property type="project" value="PomBase"/>
</dbReference>
<dbReference type="FunFam" id="3.10.20.70:FF:000004">
    <property type="entry name" value="Glutamine synthetase"/>
    <property type="match status" value="1"/>
</dbReference>
<dbReference type="FunFam" id="3.30.590.10:FF:000004">
    <property type="entry name" value="Glutamine synthetase"/>
    <property type="match status" value="1"/>
</dbReference>
<dbReference type="Gene3D" id="3.10.20.70">
    <property type="entry name" value="Glutamine synthetase, N-terminal domain"/>
    <property type="match status" value="1"/>
</dbReference>
<dbReference type="Gene3D" id="3.30.590.10">
    <property type="entry name" value="Glutamine synthetase/guanido kinase, catalytic domain"/>
    <property type="match status" value="1"/>
</dbReference>
<dbReference type="InterPro" id="IPR008147">
    <property type="entry name" value="Gln_synt_N"/>
</dbReference>
<dbReference type="InterPro" id="IPR036651">
    <property type="entry name" value="Gln_synt_N_sf"/>
</dbReference>
<dbReference type="InterPro" id="IPR014746">
    <property type="entry name" value="Gln_synth/guanido_kin_cat_dom"/>
</dbReference>
<dbReference type="InterPro" id="IPR008146">
    <property type="entry name" value="Gln_synth_cat_dom"/>
</dbReference>
<dbReference type="InterPro" id="IPR027303">
    <property type="entry name" value="Gln_synth_gly_rich_site"/>
</dbReference>
<dbReference type="InterPro" id="IPR027302">
    <property type="entry name" value="Gln_synth_N_conserv_site"/>
</dbReference>
<dbReference type="InterPro" id="IPR050292">
    <property type="entry name" value="Glutamine_Synthetase"/>
</dbReference>
<dbReference type="PANTHER" id="PTHR20852">
    <property type="entry name" value="GLUTAMINE SYNTHETASE"/>
    <property type="match status" value="1"/>
</dbReference>
<dbReference type="PANTHER" id="PTHR20852:SF57">
    <property type="entry name" value="GLUTAMINE SYNTHETASE 2 CYTOPLASMIC"/>
    <property type="match status" value="1"/>
</dbReference>
<dbReference type="Pfam" id="PF00120">
    <property type="entry name" value="Gln-synt_C"/>
    <property type="match status" value="1"/>
</dbReference>
<dbReference type="Pfam" id="PF03951">
    <property type="entry name" value="Gln-synt_N"/>
    <property type="match status" value="1"/>
</dbReference>
<dbReference type="SMART" id="SM01230">
    <property type="entry name" value="Gln-synt_C"/>
    <property type="match status" value="1"/>
</dbReference>
<dbReference type="SUPFAM" id="SSF54368">
    <property type="entry name" value="Glutamine synthetase, N-terminal domain"/>
    <property type="match status" value="1"/>
</dbReference>
<dbReference type="SUPFAM" id="SSF55931">
    <property type="entry name" value="Glutamine synthetase/guanido kinase"/>
    <property type="match status" value="1"/>
</dbReference>
<dbReference type="PROSITE" id="PS00180">
    <property type="entry name" value="GLNA_1"/>
    <property type="match status" value="1"/>
</dbReference>
<dbReference type="PROSITE" id="PS00181">
    <property type="entry name" value="GLNA_ATP"/>
    <property type="match status" value="1"/>
</dbReference>
<dbReference type="PROSITE" id="PS51986">
    <property type="entry name" value="GS_BETA_GRASP"/>
    <property type="match status" value="1"/>
</dbReference>
<dbReference type="PROSITE" id="PS51987">
    <property type="entry name" value="GS_CATALYTIC"/>
    <property type="match status" value="1"/>
</dbReference>
<reference key="1">
    <citation type="journal article" date="2002" name="Nature">
        <title>The genome sequence of Schizosaccharomyces pombe.</title>
        <authorList>
            <person name="Wood V."/>
            <person name="Gwilliam R."/>
            <person name="Rajandream M.A."/>
            <person name="Lyne M.H."/>
            <person name="Lyne R."/>
            <person name="Stewart A."/>
            <person name="Sgouros J.G."/>
            <person name="Peat N."/>
            <person name="Hayles J."/>
            <person name="Baker S.G."/>
            <person name="Basham D."/>
            <person name="Bowman S."/>
            <person name="Brooks K."/>
            <person name="Brown D."/>
            <person name="Brown S."/>
            <person name="Chillingworth T."/>
            <person name="Churcher C.M."/>
            <person name="Collins M."/>
            <person name="Connor R."/>
            <person name="Cronin A."/>
            <person name="Davis P."/>
            <person name="Feltwell T."/>
            <person name="Fraser A."/>
            <person name="Gentles S."/>
            <person name="Goble A."/>
            <person name="Hamlin N."/>
            <person name="Harris D.E."/>
            <person name="Hidalgo J."/>
            <person name="Hodgson G."/>
            <person name="Holroyd S."/>
            <person name="Hornsby T."/>
            <person name="Howarth S."/>
            <person name="Huckle E.J."/>
            <person name="Hunt S."/>
            <person name="Jagels K."/>
            <person name="James K.D."/>
            <person name="Jones L."/>
            <person name="Jones M."/>
            <person name="Leather S."/>
            <person name="McDonald S."/>
            <person name="McLean J."/>
            <person name="Mooney P."/>
            <person name="Moule S."/>
            <person name="Mungall K.L."/>
            <person name="Murphy L.D."/>
            <person name="Niblett D."/>
            <person name="Odell C."/>
            <person name="Oliver K."/>
            <person name="O'Neil S."/>
            <person name="Pearson D."/>
            <person name="Quail M.A."/>
            <person name="Rabbinowitsch E."/>
            <person name="Rutherford K.M."/>
            <person name="Rutter S."/>
            <person name="Saunders D."/>
            <person name="Seeger K."/>
            <person name="Sharp S."/>
            <person name="Skelton J."/>
            <person name="Simmonds M.N."/>
            <person name="Squares R."/>
            <person name="Squares S."/>
            <person name="Stevens K."/>
            <person name="Taylor K."/>
            <person name="Taylor R.G."/>
            <person name="Tivey A."/>
            <person name="Walsh S.V."/>
            <person name="Warren T."/>
            <person name="Whitehead S."/>
            <person name="Woodward J.R."/>
            <person name="Volckaert G."/>
            <person name="Aert R."/>
            <person name="Robben J."/>
            <person name="Grymonprez B."/>
            <person name="Weltjens I."/>
            <person name="Vanstreels E."/>
            <person name="Rieger M."/>
            <person name="Schaefer M."/>
            <person name="Mueller-Auer S."/>
            <person name="Gabel C."/>
            <person name="Fuchs M."/>
            <person name="Duesterhoeft A."/>
            <person name="Fritzc C."/>
            <person name="Holzer E."/>
            <person name="Moestl D."/>
            <person name="Hilbert H."/>
            <person name="Borzym K."/>
            <person name="Langer I."/>
            <person name="Beck A."/>
            <person name="Lehrach H."/>
            <person name="Reinhardt R."/>
            <person name="Pohl T.M."/>
            <person name="Eger P."/>
            <person name="Zimmermann W."/>
            <person name="Wedler H."/>
            <person name="Wambutt R."/>
            <person name="Purnelle B."/>
            <person name="Goffeau A."/>
            <person name="Cadieu E."/>
            <person name="Dreano S."/>
            <person name="Gloux S."/>
            <person name="Lelaure V."/>
            <person name="Mottier S."/>
            <person name="Galibert F."/>
            <person name="Aves S.J."/>
            <person name="Xiang Z."/>
            <person name="Hunt C."/>
            <person name="Moore K."/>
            <person name="Hurst S.M."/>
            <person name="Lucas M."/>
            <person name="Rochet M."/>
            <person name="Gaillardin C."/>
            <person name="Tallada V.A."/>
            <person name="Garzon A."/>
            <person name="Thode G."/>
            <person name="Daga R.R."/>
            <person name="Cruzado L."/>
            <person name="Jimenez J."/>
            <person name="Sanchez M."/>
            <person name="del Rey F."/>
            <person name="Benito J."/>
            <person name="Dominguez A."/>
            <person name="Revuelta J.L."/>
            <person name="Moreno S."/>
            <person name="Armstrong J."/>
            <person name="Forsburg S.L."/>
            <person name="Cerutti L."/>
            <person name="Lowe T."/>
            <person name="McCombie W.R."/>
            <person name="Paulsen I."/>
            <person name="Potashkin J."/>
            <person name="Shpakovski G.V."/>
            <person name="Ussery D."/>
            <person name="Barrell B.G."/>
            <person name="Nurse P."/>
        </authorList>
    </citation>
    <scope>NUCLEOTIDE SEQUENCE [LARGE SCALE GENOMIC DNA]</scope>
    <source>
        <strain>972 / ATCC 24843</strain>
    </source>
</reference>
<reference key="2">
    <citation type="journal article" date="2008" name="J. Proteome Res.">
        <title>Phosphoproteome analysis of fission yeast.</title>
        <authorList>
            <person name="Wilson-Grady J.T."/>
            <person name="Villen J."/>
            <person name="Gygi S.P."/>
        </authorList>
    </citation>
    <scope>PHOSPHORYLATION [LARGE SCALE ANALYSIS] AT SER-273; THR-303 AND SER-305</scope>
    <scope>IDENTIFICATION BY MASS SPECTROMETRY</scope>
</reference>